<reference key="1">
    <citation type="journal article" date="1993" name="Mol. Cell. Biol.">
        <title>Molecular cloning of a human cDNA encoding a novel protein, DAD1, whose defect causes apoptotic cell death in hamster BHK21 cells.</title>
        <authorList>
            <person name="Nakashima T."/>
            <person name="Sekiguchi T."/>
            <person name="Kuraoka A."/>
            <person name="Fukushima K."/>
            <person name="Shibata Y."/>
            <person name="Komiyama S."/>
            <person name="Nishimoto T."/>
        </authorList>
    </citation>
    <scope>NUCLEOTIDE SEQUENCE [MRNA]</scope>
    <scope>VARIANT ARG-38</scope>
</reference>
<comment type="function">
    <text evidence="1">Subunit of the oligosaccharyl transferase (OST) complex that catalyzes the initial transfer of a defined glycan (Glc(3)Man(9)GlcNAc(2) in eukaryotes) from the lipid carrier dolichol-pyrophosphate to an asparagine residue within an Asn-X-Ser/Thr consensus motif in nascent polypeptide chains, the first step in protein N-glycosylation. N-glycosylation occurs cotranslationally and the complex associates with the Sec61 complex at the channel-forming translocon complex that mediates protein translocation across the endoplasmic reticulum (ER). All subunits are required for a maximal enzyme activity.</text>
</comment>
<comment type="pathway">
    <text evidence="2">Protein modification; protein glycosylation.</text>
</comment>
<comment type="subunit">
    <text evidence="1">Component of the oligosaccharyltransferase (OST) complex. OST exists in two different complex forms which contain common core subunits RPN1, RPN2, OST48, OST4, DAD1 and TMEM258, either STT3A or STT3B as catalytic subunits, and form-specific accessory subunits. STT3A complex assembly occurs through the formation of 3 subcomplexes. Subcomplex 1 contains RPN1 and TMEM258, subcomplex 2 contains the STT3A-specific subunits STT3A, DC2/OSTC, and KCP2 as well as the core subunit OST4, and subcomplex 3 contains RPN2, DAD1, and OST48. The STT3A complex can form stable complexes with the Sec61 complex or with both the Sec61 and TRAP complexes.</text>
</comment>
<comment type="subcellular location">
    <subcellularLocation>
        <location>Endoplasmic reticulum membrane</location>
        <topology evidence="5">Multi-pass membrane protein</topology>
    </subcellularLocation>
</comment>
<comment type="similarity">
    <text evidence="5">Belongs to the DAD/OST2 family.</text>
</comment>
<evidence type="ECO:0000250" key="1">
    <source>
        <dbReference type="UniProtKB" id="E2R4X3"/>
    </source>
</evidence>
<evidence type="ECO:0000250" key="2">
    <source>
        <dbReference type="UniProtKB" id="P61803"/>
    </source>
</evidence>
<evidence type="ECO:0000255" key="3"/>
<evidence type="ECO:0000269" key="4">
    <source>
    </source>
</evidence>
<evidence type="ECO:0000305" key="5"/>
<name>DAD1_MESAU</name>
<protein>
    <recommendedName>
        <fullName evidence="2">Dolichyl-diphosphooligosaccharide--protein glycosyltransferase subunit DAD1</fullName>
        <shortName>Oligosaccharyl transferase subunit DAD1</shortName>
    </recommendedName>
    <alternativeName>
        <fullName>Defender against cell death 1</fullName>
        <shortName>DAD-1</shortName>
    </alternativeName>
</protein>
<dbReference type="EMBL" id="D15058">
    <property type="protein sequence ID" value="BAA03651.1"/>
    <property type="molecule type" value="mRNA"/>
</dbReference>
<dbReference type="PIR" id="C54437">
    <property type="entry name" value="C54437"/>
</dbReference>
<dbReference type="RefSeq" id="NP_001268553.1">
    <property type="nucleotide sequence ID" value="NM_001281624.1"/>
</dbReference>
<dbReference type="RefSeq" id="XP_012980316.1">
    <property type="nucleotide sequence ID" value="XM_013124862.1"/>
</dbReference>
<dbReference type="SMR" id="P61806"/>
<dbReference type="STRING" id="10036.ENSMAUP00000002275"/>
<dbReference type="Ensembl" id="ENSMAUT00000002451">
    <property type="protein sequence ID" value="ENSMAUP00000002275"/>
    <property type="gene ID" value="ENSMAUG00000001827"/>
</dbReference>
<dbReference type="GeneID" id="101827723"/>
<dbReference type="KEGG" id="maua:101827723"/>
<dbReference type="CTD" id="1603"/>
<dbReference type="eggNOG" id="KOG1746">
    <property type="taxonomic scope" value="Eukaryota"/>
</dbReference>
<dbReference type="OrthoDB" id="445566at2759"/>
<dbReference type="UniPathway" id="UPA00378"/>
<dbReference type="Proteomes" id="UP000189706">
    <property type="component" value="Unplaced"/>
</dbReference>
<dbReference type="GO" id="GO:0008250">
    <property type="term" value="C:oligosaccharyltransferase complex"/>
    <property type="evidence" value="ECO:0000250"/>
    <property type="project" value="UniProtKB"/>
</dbReference>
<dbReference type="GO" id="GO:0160226">
    <property type="term" value="C:oligosaccharyltransferase complex A"/>
    <property type="evidence" value="ECO:0007669"/>
    <property type="project" value="Ensembl"/>
</dbReference>
<dbReference type="GO" id="GO:0160227">
    <property type="term" value="C:oligosaccharyltransferase complex B"/>
    <property type="evidence" value="ECO:0007669"/>
    <property type="project" value="Ensembl"/>
</dbReference>
<dbReference type="GO" id="GO:0008047">
    <property type="term" value="F:enzyme activator activity"/>
    <property type="evidence" value="ECO:0007669"/>
    <property type="project" value="Ensembl"/>
</dbReference>
<dbReference type="GO" id="GO:0006915">
    <property type="term" value="P:apoptotic process"/>
    <property type="evidence" value="ECO:0007669"/>
    <property type="project" value="UniProtKB-KW"/>
</dbReference>
<dbReference type="GO" id="GO:0001824">
    <property type="term" value="P:blastocyst development"/>
    <property type="evidence" value="ECO:0007669"/>
    <property type="project" value="Ensembl"/>
</dbReference>
<dbReference type="GO" id="GO:0043066">
    <property type="term" value="P:negative regulation of apoptotic process"/>
    <property type="evidence" value="ECO:0007669"/>
    <property type="project" value="Ensembl"/>
</dbReference>
<dbReference type="GO" id="GO:0006486">
    <property type="term" value="P:protein glycosylation"/>
    <property type="evidence" value="ECO:0000250"/>
    <property type="project" value="UniProtKB"/>
</dbReference>
<dbReference type="GO" id="GO:0018279">
    <property type="term" value="P:protein N-linked glycosylation via asparagine"/>
    <property type="evidence" value="ECO:0007669"/>
    <property type="project" value="Ensembl"/>
</dbReference>
<dbReference type="GO" id="GO:0031647">
    <property type="term" value="P:regulation of protein stability"/>
    <property type="evidence" value="ECO:0007669"/>
    <property type="project" value="Ensembl"/>
</dbReference>
<dbReference type="InterPro" id="IPR003038">
    <property type="entry name" value="DAD/Ost2"/>
</dbReference>
<dbReference type="PANTHER" id="PTHR10705">
    <property type="entry name" value="DOLICHYL-DIPHOSPHOOLIGOSACCHARIDE--PROTEIN GLYCOSYLTRANSFERASE SUBUNIT DAD1"/>
    <property type="match status" value="1"/>
</dbReference>
<dbReference type="PANTHER" id="PTHR10705:SF0">
    <property type="entry name" value="DOLICHYL-DIPHOSPHOOLIGOSACCHARIDE--PROTEIN GLYCOSYLTRANSFERASE SUBUNIT DAD1"/>
    <property type="match status" value="1"/>
</dbReference>
<dbReference type="Pfam" id="PF02109">
    <property type="entry name" value="DAD"/>
    <property type="match status" value="1"/>
</dbReference>
<dbReference type="PIRSF" id="PIRSF005588">
    <property type="entry name" value="DAD"/>
    <property type="match status" value="1"/>
</dbReference>
<sequence length="113" mass="12497">MSASVVSVISRFLEEYLSSTPQRLKLLDAYLLYILLTGALQFGYCLLVGTFPFNSFLSGFISCVGSFILAVCLRIQINPQNKADFQGISPERAFADFLFASTILHLVVMNFVG</sequence>
<feature type="initiator methionine" description="Removed" evidence="2">
    <location>
        <position position="1"/>
    </location>
</feature>
<feature type="chain" id="PRO_0000124010" description="Dolichyl-diphosphooligosaccharide--protein glycosyltransferase subunit DAD1">
    <location>
        <begin position="2"/>
        <end position="113"/>
    </location>
</feature>
<feature type="topological domain" description="Cytoplasmic" evidence="3">
    <location>
        <begin position="2"/>
        <end position="30"/>
    </location>
</feature>
<feature type="transmembrane region" description="Helical" evidence="3">
    <location>
        <begin position="31"/>
        <end position="51"/>
    </location>
</feature>
<feature type="topological domain" description="Lumenal" evidence="3">
    <location>
        <position position="52"/>
    </location>
</feature>
<feature type="transmembrane region" description="Helical" evidence="3">
    <location>
        <begin position="53"/>
        <end position="73"/>
    </location>
</feature>
<feature type="topological domain" description="Cytoplasmic" evidence="3">
    <location>
        <begin position="74"/>
        <end position="92"/>
    </location>
</feature>
<feature type="transmembrane region" description="Helical" evidence="3">
    <location>
        <begin position="93"/>
        <end position="113"/>
    </location>
</feature>
<feature type="modified residue" description="N-acetylserine" evidence="2">
    <location>
        <position position="2"/>
    </location>
</feature>
<feature type="sequence variant" description="In cell line tsBN7; confers temperature sensitivity." evidence="4">
    <original>G</original>
    <variation>R</variation>
    <location>
        <position position="38"/>
    </location>
</feature>
<keyword id="KW-0007">Acetylation</keyword>
<keyword id="KW-0053">Apoptosis</keyword>
<keyword id="KW-0256">Endoplasmic reticulum</keyword>
<keyword id="KW-0472">Membrane</keyword>
<keyword id="KW-1185">Reference proteome</keyword>
<keyword id="KW-0812">Transmembrane</keyword>
<keyword id="KW-1133">Transmembrane helix</keyword>
<organism>
    <name type="scientific">Mesocricetus auratus</name>
    <name type="common">Golden hamster</name>
    <dbReference type="NCBI Taxonomy" id="10036"/>
    <lineage>
        <taxon>Eukaryota</taxon>
        <taxon>Metazoa</taxon>
        <taxon>Chordata</taxon>
        <taxon>Craniata</taxon>
        <taxon>Vertebrata</taxon>
        <taxon>Euteleostomi</taxon>
        <taxon>Mammalia</taxon>
        <taxon>Eutheria</taxon>
        <taxon>Euarchontoglires</taxon>
        <taxon>Glires</taxon>
        <taxon>Rodentia</taxon>
        <taxon>Myomorpha</taxon>
        <taxon>Muroidea</taxon>
        <taxon>Cricetidae</taxon>
        <taxon>Cricetinae</taxon>
        <taxon>Mesocricetus</taxon>
    </lineage>
</organism>
<accession>P61806</accession>
<accession>O08552</accession>
<accession>O70364</accession>
<accession>P46966</accession>
<accession>P46968</accession>
<accession>Q96GB7</accession>
<proteinExistence type="inferred from homology"/>
<gene>
    <name evidence="2" type="primary">DAD1</name>
</gene>